<evidence type="ECO:0000250" key="1">
    <source>
        <dbReference type="UniProtKB" id="Q5B0D0"/>
    </source>
</evidence>
<evidence type="ECO:0000250" key="2">
    <source>
        <dbReference type="UniProtKB" id="Q5BH30"/>
    </source>
</evidence>
<evidence type="ECO:0000255" key="3"/>
<evidence type="ECO:0000255" key="4">
    <source>
        <dbReference type="PROSITE-ProRule" id="PRU00258"/>
    </source>
</evidence>
<evidence type="ECO:0000255" key="5">
    <source>
        <dbReference type="PROSITE-ProRule" id="PRU01348"/>
    </source>
</evidence>
<evidence type="ECO:0000255" key="6">
    <source>
        <dbReference type="PROSITE-ProRule" id="PRU01363"/>
    </source>
</evidence>
<evidence type="ECO:0000256" key="7">
    <source>
        <dbReference type="SAM" id="MobiDB-lite"/>
    </source>
</evidence>
<evidence type="ECO:0000269" key="8">
    <source>
    </source>
</evidence>
<evidence type="ECO:0000303" key="9">
    <source>
    </source>
</evidence>
<evidence type="ECO:0000305" key="10">
    <source>
    </source>
</evidence>
<sequence length="1781" mass="193642">MKVAYFSNEFPHDDTRDLFRRLHVHSKDKRYPTLARFISEATSALRDEVAALPTALRALVPTFDSIFSLVDNTAVRQGRLGGAIDGVLLCALHIATFIGFYESDTEEEFDLSAVDTCLAGLGTGLLSTVALSLSPSLADLPTTGALVVGIAFRLGVVVDDVSQNLQPRPAIAESGPGDSWAYVVPDVSPEEIQKELDTIQIAEKTPEPSKIFISALSRTSVTVSGPPARLKHLFLVSAYFRDRKHVALPVYAGLCHAAHIYDEHHVEKIIQSSSLDSISAKYRPRVRVLSTSTGRPFSGLTAKELFRNVIEEILTKSIEWDEVIRGIIQRAKDSAAVECDVLIFRTSLPVHELLATFGTELQQFRASTKDLVSWIAKPDSPPAKPSGKAQSKIAIVGMACRLPGGSTDPDKFWDLLEKGLDVHRKIPADRFDVDSHYDPEGKRMNASWTPYGCFIDEPGLFDAPFFNMSPREALQTDPMQRLALVTAYEALEKAGVVPNRTAATDAHRIGTYYGQASDDYREVNTAQEISTYFITGGCRAFGPGRINYFFKFSGPSYSVDTACSSGLAAIQACTSLWAGEVETAIAGGVNVLTNCDAFAGLSNGHFLTKTPNACKTWDCDADGYCRADGVVSLVLKRLEDAEADNDNILGVILGAGTNHSADAVSITHPHAGAQAFLTSQTVRKAGVDPFDISYIEMHGTGTQAGDAQEILSVTEVFAPLTRRRTSKQPLYIGSVKANVGHGEAVSGPTALVKLLLMFQKEAIPAHVGIKNSINPGFPKDLAKRNLHIPYEQTPWPRVPGKKRIAVVNNFSAAGGNTSVVVEEASVREPVKGTDPRSSHLITVSAKSKVSLKGNLERLIAYVEANPDVSLADLAYTTTARRRHHNHRVAVAASDAAQLKKQLGSYLQSVESHKPIPSTGQPPVVFAFTGQGASHPSMNLELFHHSPYFRAQLLHLDSLAQQQGFGSFIPVVDGSHERSHAHSPTATQLALVCVEIALAKYWESLGVKPDVVIGHSLGEYAALHVAGVLSASDAISMVGRRAALLEQKCQTGSHQMLAVRASLADIQAIVHDKPYEVSCINGPRDTVLSGTREQVAVLTEVLQAAGHRCISLDVAFAFHSAQTDPILEEFEEVTKSSILFQPPNLPIISPLLGKVIFDEKTVNATYVRRATREAVNFLGAIEIAQQMSTIDETMAWIEIGPHPVCINFVKSILPRVNVAVPSIRRGEDNWQTVSHSLGLLHCAGLELNWNEFHLAFEENLRLVDLPTYAWNDKTHWIQYIGDWALTKGNTFYDAEKAAANPGALVHTRSNIKTSTVQQIIEETFSDSAATVVMQSNLMEPDFLAAAHGHRMNDCGVVTSSIHADIAYTLGAYIMKKLRPKSQNVGMDIANLEVLKGLIAQKNTDKPQFIQVSAQVHDIDLGVAHLQWHNVSSNGEVDEPFASADIVYGLPTDWLKSWVPATHLVQGRIEALERLAEAGIANRLSHNMAYLLFANNLVDYAQKYRGMQSVVMHELEAFADVTLTTEKGGVWTVPPYFIDSVAHLAGFVMNVSDANDTKQNFCVTPGWGSMRFAKPLVAGQKYRSYVKMIPTEEDPTVYLGDVYVLQDGVIIGEVGAIKFRRYPRVLLNRFFSAPDSDTSKHTSATDVSPPKKVVQSASTTTTVTKALPSKPVAIPAPQVAAPVVQPTEQVTVVKAVTELTSTVEVDSDSTASKAMALVAAEGGLELSDLPDDANFANLGVDSLMSLVIAEKFREQLGVTVNGSLFLEYPTVGDLKAWLMEYYS</sequence>
<comment type="function">
    <text evidence="8 10">Atrochrysone carboxylic acid synthase; part of the gene cluster that mediates the biosynthesis of the dimeric xanthones cryptosporioptides (PubMed:30996871). The pathway begins with the synthesis of atrochrysone thioester by the polyketide synthase dmx-nrPKS (Probable). The atrochrysone carboxyl ACP thioesterase dmxR1 then breaks the thioester bond and releases the atrochrysone carboxylic acid from dmx-nrPKS (Probable). Atrochrysone carboxylic acid is decarboxylated by the decarboxylase dmxR15, and oxidized by the anthrone oxygenase dmxR16 to yield emodin (Probable). Emodin is then reduced to emodin hydroquinone by the oxidoreductase dmxR7 (Probable). A-ring reduction by the short chain dehydrogenase dmxR18, dehydration by the scytalone dehydratase-like protein dmxR17 and probable spontaneous re-oxidation, results in overall deoxygenation to chrysophanol (PubMed:30996871). Baeyer-Villiger oxidation by the Baeyer-Villiger monooxygenase (BVMO) dmxR6 then yields monodictylactone in equilibrium with monodictyphenone (PubMed:30996871). In the case of the cryptosporioptides biosynthesis, monodictylactone is reduced at C-12 to an alcohol (by the short chain dehydrogenases dmxR12 or dmxR8) and hydroxylated at C-5 by dmxR9, yielding the electron-rich aromatic which could eliminate H(2)O to form the ortho-quinonemethide, followed by tautomerisation to paraquinone and complete the formal reduction to produce the 10-methylgroup (Probable). Conjugate addition of C-4a-OH to the resulting paraquinone by the monooxygenase dmxR10 then gives cyclohexadienone, which is then reduced at C-5 by the short chain dehydrogenase dmxR3 to give the dihydroxanthone (Probable). The 6,7-epoxide in the cryptosporioptides could be introduced by the cytochrome P450 monooxygenase dmxL3 (Probable). The highly reducing PKS dmxL2 manufactures butyrate, which is further carboxylated by dmxL1 to form ethylmalonate (PubMed:30996871). It is not yet clear whether the carboxylation occurs while the butyrate is attached to the ACP of dmxL2, but this unusual fungal metabolite could then be esterified to O-5 by the O-acetyltransferase dmxR13 (PubMed:30996871). Finally, dimerization performed by dmxR5 gives the observed dimers cryptosporioptides A, B and C as the final products of the pathway (PubMed:30996871).</text>
</comment>
<comment type="catalytic activity">
    <reaction evidence="2">
        <text>holo-[ACP] + 8 malonyl-CoA + 8 H(+) = atrochrysone carboxyl-[ACP] + 8 CO2 + 8 CoA + 2 H2O</text>
        <dbReference type="Rhea" id="RHEA:64232"/>
        <dbReference type="Rhea" id="RHEA-COMP:9685"/>
        <dbReference type="Rhea" id="RHEA-COMP:16552"/>
        <dbReference type="ChEBI" id="CHEBI:15377"/>
        <dbReference type="ChEBI" id="CHEBI:15378"/>
        <dbReference type="ChEBI" id="CHEBI:16526"/>
        <dbReference type="ChEBI" id="CHEBI:57287"/>
        <dbReference type="ChEBI" id="CHEBI:57384"/>
        <dbReference type="ChEBI" id="CHEBI:64479"/>
        <dbReference type="ChEBI" id="CHEBI:149712"/>
    </reaction>
    <physiologicalReaction direction="left-to-right" evidence="2">
        <dbReference type="Rhea" id="RHEA:64233"/>
    </physiologicalReaction>
</comment>
<comment type="pathway">
    <text evidence="8">Secondary metabolite biosynthesis.</text>
</comment>
<comment type="domain">
    <text evidence="1">Multidomain protein; including a starter unit:ACP transacylase (SAT) that selects the starter unit; a ketosynthase (KS) that catalyzes repeated decarboxylative condensation to elongate the polyketide backbone; a malonyl-CoA:ACP transacylase (MAT) that selects and transfers the extender unit malonyl-CoA; a product template (PT) domain that controls the immediate cyclization regioselectivity of the reactive polyketide backbone; and an acyl-carrier protein (ACP) that serves as the tether of the growing and completed polyketide via its phosphopantetheinyl arm.</text>
</comment>
<keyword id="KW-0511">Multifunctional enzyme</keyword>
<keyword id="KW-0596">Phosphopantetheine</keyword>
<keyword id="KW-0597">Phosphoprotein</keyword>
<keyword id="KW-0808">Transferase</keyword>
<proteinExistence type="inferred from homology"/>
<protein>
    <recommendedName>
        <fullName evidence="2">Atrochrysone carboxylic acid synthase</fullName>
        <shortName evidence="2">ACAS</shortName>
        <ecNumber evidence="2">2.3.1.-</ecNumber>
    </recommendedName>
    <alternativeName>
        <fullName evidence="9">Dimeric xanthone biosynthesis cluster PKS</fullName>
    </alternativeName>
    <alternativeName>
        <fullName evidence="9">Non-reducing polyketide synthase dmx-nrPKS</fullName>
    </alternativeName>
</protein>
<accession>A0A4P8DJU2</accession>
<feature type="chain" id="PRO_0000453430" description="Atrochrysone carboxylic acid synthase">
    <location>
        <begin position="1"/>
        <end position="1781"/>
    </location>
</feature>
<feature type="domain" description="Ketosynthase family 3 (KS3)" evidence="5">
    <location>
        <begin position="390"/>
        <end position="823"/>
    </location>
</feature>
<feature type="domain" description="PKS/mFAS DH" evidence="6">
    <location>
        <begin position="1316"/>
        <end position="1626"/>
    </location>
</feature>
<feature type="domain" description="Carrier" evidence="4">
    <location>
        <begin position="1703"/>
        <end position="1780"/>
    </location>
</feature>
<feature type="region of interest" description="N-terminal acylcarrier protein transacylase domain (SAT)" evidence="3">
    <location>
        <begin position="15"/>
        <end position="253"/>
    </location>
</feature>
<feature type="region of interest" description="Malonyl-CoA:ACP transacylase (MAT) domain" evidence="3">
    <location>
        <begin position="925"/>
        <end position="1244"/>
    </location>
</feature>
<feature type="region of interest" description="Product template (PT) domain" evidence="3">
    <location>
        <begin position="1312"/>
        <end position="1631"/>
    </location>
</feature>
<feature type="region of interest" description="N-terminal hotdog fold" evidence="6">
    <location>
        <begin position="1316"/>
        <end position="1451"/>
    </location>
</feature>
<feature type="region of interest" description="C-terminal hotdog fold" evidence="6">
    <location>
        <begin position="1478"/>
        <end position="1626"/>
    </location>
</feature>
<feature type="region of interest" description="Disordered" evidence="7">
    <location>
        <begin position="1633"/>
        <end position="1653"/>
    </location>
</feature>
<feature type="active site" description="For beta-ketoacyl synthase activity" evidence="5">
    <location>
        <position position="563"/>
    </location>
</feature>
<feature type="active site" description="For beta-ketoacyl synthase activity" evidence="5">
    <location>
        <position position="698"/>
    </location>
</feature>
<feature type="active site" description="For beta-ketoacyl synthase activity" evidence="5">
    <location>
        <position position="741"/>
    </location>
</feature>
<feature type="active site" description="Proton acceptor; for dehydratase activity" evidence="6">
    <location>
        <position position="1348"/>
    </location>
</feature>
<feature type="active site" description="Proton donor; for dehydratase activity" evidence="6">
    <location>
        <position position="1537"/>
    </location>
</feature>
<feature type="modified residue" description="O-(pantetheine 4'-phosphoryl)serine" evidence="4">
    <location>
        <position position="1740"/>
    </location>
</feature>
<name>DMPKS_CRYX8</name>
<dbReference type="EC" id="2.3.1.-" evidence="2"/>
<dbReference type="EMBL" id="MK182094">
    <property type="protein sequence ID" value="QCL09091.1"/>
    <property type="molecule type" value="Genomic_DNA"/>
</dbReference>
<dbReference type="SMR" id="A0A4P8DJU2"/>
<dbReference type="GO" id="GO:0004315">
    <property type="term" value="F:3-oxoacyl-[acyl-carrier-protein] synthase activity"/>
    <property type="evidence" value="ECO:0007669"/>
    <property type="project" value="InterPro"/>
</dbReference>
<dbReference type="GO" id="GO:0004312">
    <property type="term" value="F:fatty acid synthase activity"/>
    <property type="evidence" value="ECO:0007669"/>
    <property type="project" value="TreeGrafter"/>
</dbReference>
<dbReference type="GO" id="GO:0031177">
    <property type="term" value="F:phosphopantetheine binding"/>
    <property type="evidence" value="ECO:0007669"/>
    <property type="project" value="InterPro"/>
</dbReference>
<dbReference type="GO" id="GO:0006633">
    <property type="term" value="P:fatty acid biosynthetic process"/>
    <property type="evidence" value="ECO:0007669"/>
    <property type="project" value="InterPro"/>
</dbReference>
<dbReference type="CDD" id="cd00833">
    <property type="entry name" value="PKS"/>
    <property type="match status" value="1"/>
</dbReference>
<dbReference type="FunFam" id="3.40.366.10:FF:000017">
    <property type="entry name" value="Non-reducing polyketide synthase aptA"/>
    <property type="match status" value="1"/>
</dbReference>
<dbReference type="FunFam" id="3.40.366.10:FF:000002">
    <property type="entry name" value="Probable polyketide synthase 2"/>
    <property type="match status" value="1"/>
</dbReference>
<dbReference type="FunFam" id="1.10.1200.10:FF:000011">
    <property type="entry name" value="Sterigmatocystin biosynthesis polyketide synthase"/>
    <property type="match status" value="1"/>
</dbReference>
<dbReference type="FunFam" id="3.10.129.110:FF:000001">
    <property type="entry name" value="Sterigmatocystin biosynthesis polyketide synthase"/>
    <property type="match status" value="1"/>
</dbReference>
<dbReference type="FunFam" id="3.40.47.10:FF:000031">
    <property type="entry name" value="Sterigmatocystin biosynthesis polyketide synthase"/>
    <property type="match status" value="1"/>
</dbReference>
<dbReference type="Gene3D" id="3.30.70.3290">
    <property type="match status" value="1"/>
</dbReference>
<dbReference type="Gene3D" id="3.40.47.10">
    <property type="match status" value="1"/>
</dbReference>
<dbReference type="Gene3D" id="1.10.1200.10">
    <property type="entry name" value="ACP-like"/>
    <property type="match status" value="1"/>
</dbReference>
<dbReference type="Gene3D" id="3.40.366.10">
    <property type="entry name" value="Malonyl-Coenzyme A Acyl Carrier Protein, domain 2"/>
    <property type="match status" value="2"/>
</dbReference>
<dbReference type="Gene3D" id="3.10.129.110">
    <property type="entry name" value="Polyketide synthase dehydratase"/>
    <property type="match status" value="1"/>
</dbReference>
<dbReference type="InterPro" id="IPR001227">
    <property type="entry name" value="Ac_transferase_dom_sf"/>
</dbReference>
<dbReference type="InterPro" id="IPR036736">
    <property type="entry name" value="ACP-like_sf"/>
</dbReference>
<dbReference type="InterPro" id="IPR014043">
    <property type="entry name" value="Acyl_transferase_dom"/>
</dbReference>
<dbReference type="InterPro" id="IPR016035">
    <property type="entry name" value="Acyl_Trfase/lysoPLipase"/>
</dbReference>
<dbReference type="InterPro" id="IPR018201">
    <property type="entry name" value="Ketoacyl_synth_AS"/>
</dbReference>
<dbReference type="InterPro" id="IPR014031">
    <property type="entry name" value="Ketoacyl_synth_C"/>
</dbReference>
<dbReference type="InterPro" id="IPR014030">
    <property type="entry name" value="Ketoacyl_synth_N"/>
</dbReference>
<dbReference type="InterPro" id="IPR016036">
    <property type="entry name" value="Malonyl_transacylase_ACP-bd"/>
</dbReference>
<dbReference type="InterPro" id="IPR020841">
    <property type="entry name" value="PKS_Beta-ketoAc_synthase_dom"/>
</dbReference>
<dbReference type="InterPro" id="IPR042104">
    <property type="entry name" value="PKS_dehydratase_sf"/>
</dbReference>
<dbReference type="InterPro" id="IPR049900">
    <property type="entry name" value="PKS_mFAS_DH"/>
</dbReference>
<dbReference type="InterPro" id="IPR050091">
    <property type="entry name" value="PKS_NRPS_Biosynth_Enz"/>
</dbReference>
<dbReference type="InterPro" id="IPR020806">
    <property type="entry name" value="PKS_PP-bd"/>
</dbReference>
<dbReference type="InterPro" id="IPR009081">
    <property type="entry name" value="PP-bd_ACP"/>
</dbReference>
<dbReference type="InterPro" id="IPR030918">
    <property type="entry name" value="PT_fungal_PKS"/>
</dbReference>
<dbReference type="InterPro" id="IPR032088">
    <property type="entry name" value="SAT"/>
</dbReference>
<dbReference type="InterPro" id="IPR016039">
    <property type="entry name" value="Thiolase-like"/>
</dbReference>
<dbReference type="NCBIfam" id="TIGR04532">
    <property type="entry name" value="PT_fungal_PKS"/>
    <property type="match status" value="1"/>
</dbReference>
<dbReference type="PANTHER" id="PTHR43775">
    <property type="entry name" value="FATTY ACID SYNTHASE"/>
    <property type="match status" value="1"/>
</dbReference>
<dbReference type="PANTHER" id="PTHR43775:SF37">
    <property type="entry name" value="SI:DKEY-61P9.11"/>
    <property type="match status" value="1"/>
</dbReference>
<dbReference type="Pfam" id="PF00698">
    <property type="entry name" value="Acyl_transf_1"/>
    <property type="match status" value="1"/>
</dbReference>
<dbReference type="Pfam" id="PF22621">
    <property type="entry name" value="CurL-like_PKS_C"/>
    <property type="match status" value="1"/>
</dbReference>
<dbReference type="Pfam" id="PF00109">
    <property type="entry name" value="ketoacyl-synt"/>
    <property type="match status" value="1"/>
</dbReference>
<dbReference type="Pfam" id="PF02801">
    <property type="entry name" value="Ketoacyl-synt_C"/>
    <property type="match status" value="1"/>
</dbReference>
<dbReference type="Pfam" id="PF00550">
    <property type="entry name" value="PP-binding"/>
    <property type="match status" value="1"/>
</dbReference>
<dbReference type="Pfam" id="PF16073">
    <property type="entry name" value="SAT"/>
    <property type="match status" value="1"/>
</dbReference>
<dbReference type="SMART" id="SM00827">
    <property type="entry name" value="PKS_AT"/>
    <property type="match status" value="1"/>
</dbReference>
<dbReference type="SMART" id="SM00825">
    <property type="entry name" value="PKS_KS"/>
    <property type="match status" value="1"/>
</dbReference>
<dbReference type="SMART" id="SM00823">
    <property type="entry name" value="PKS_PP"/>
    <property type="match status" value="1"/>
</dbReference>
<dbReference type="SUPFAM" id="SSF47336">
    <property type="entry name" value="ACP-like"/>
    <property type="match status" value="1"/>
</dbReference>
<dbReference type="SUPFAM" id="SSF52151">
    <property type="entry name" value="FabD/lysophospholipase-like"/>
    <property type="match status" value="1"/>
</dbReference>
<dbReference type="SUPFAM" id="SSF55048">
    <property type="entry name" value="Probable ACP-binding domain of malonyl-CoA ACP transacylase"/>
    <property type="match status" value="1"/>
</dbReference>
<dbReference type="SUPFAM" id="SSF53901">
    <property type="entry name" value="Thiolase-like"/>
    <property type="match status" value="1"/>
</dbReference>
<dbReference type="PROSITE" id="PS50075">
    <property type="entry name" value="CARRIER"/>
    <property type="match status" value="1"/>
</dbReference>
<dbReference type="PROSITE" id="PS00606">
    <property type="entry name" value="KS3_1"/>
    <property type="match status" value="1"/>
</dbReference>
<dbReference type="PROSITE" id="PS52004">
    <property type="entry name" value="KS3_2"/>
    <property type="match status" value="1"/>
</dbReference>
<dbReference type="PROSITE" id="PS52019">
    <property type="entry name" value="PKS_MFAS_DH"/>
    <property type="match status" value="1"/>
</dbReference>
<organism>
    <name type="scientific">Cryptosporiopsis sp. (strain 8999)</name>
    <dbReference type="NCBI Taxonomy" id="2572248"/>
    <lineage>
        <taxon>Eukaryota</taxon>
        <taxon>Fungi</taxon>
        <taxon>Dikarya</taxon>
        <taxon>Ascomycota</taxon>
        <taxon>Pezizomycotina</taxon>
        <taxon>Leotiomycetes</taxon>
        <taxon>Helotiales</taxon>
        <taxon>Dermateaceae</taxon>
        <taxon>Cryptosporiopsis</taxon>
    </lineage>
</organism>
<gene>
    <name evidence="9" type="primary">dmx-nrPKS</name>
</gene>
<reference key="1">
    <citation type="journal article" date="2019" name="Chem. Sci.">
        <title>Structure revision of cryptosporioptides and determination of the genetic basis for dimeric xanthone biosynthesis in fungi.</title>
        <authorList>
            <person name="Greco C."/>
            <person name="de Mattos-Shipley K."/>
            <person name="Bailey A.M."/>
            <person name="Mulholland N.P."/>
            <person name="Vincent J.L."/>
            <person name="Willis C.L."/>
            <person name="Cox R.J."/>
            <person name="Simpson T.J."/>
        </authorList>
    </citation>
    <scope>NUCLEOTIDE SEQUENCE [GENOMIC DNA]</scope>
    <scope>FUNCTION</scope>
    <scope>PATHWAY</scope>
    <source>
        <strain>8999</strain>
    </source>
</reference>